<gene>
    <name evidence="1" type="primary">pgk</name>
    <name type="ordered locus">Ppha_2906</name>
</gene>
<sequence length="397" mass="42526">MQKKSLSDIAIQGKRVLMRVDFNVPLDSNKKITDDKRIIESLPSIKKVLENGGRLILMSHLGRPKGKVNADYSLAPVATRLAELLDCPVTMAKECIGTETMQQVLALQDGEVILLENLRFHPEEEANDPDFARELASLGEVYVNDAFGTAHRAHASTEGITHYVQTAVAGFLIERELLYLGKALQEPERPFVAILGGSKISGKIDVLENLFKKVDTVLIGGAMVFTFFKAQGYEIGNSLVEESKIELALKILDEAKNKGIKLLLPVDVIVAPEISATADCHSEMITAIPEEMIGVDIGPLTAEIYRNEILSARTVLWNGPMGVFEIDNFAAGTMAVAQAMAEATAEGATTIIGGGDSAAAVAKAGLANEMTHISTGGGASLEFLEGKELPGIAALND</sequence>
<proteinExistence type="inferred from homology"/>
<comment type="catalytic activity">
    <reaction evidence="1">
        <text>(2R)-3-phosphoglycerate + ATP = (2R)-3-phospho-glyceroyl phosphate + ADP</text>
        <dbReference type="Rhea" id="RHEA:14801"/>
        <dbReference type="ChEBI" id="CHEBI:30616"/>
        <dbReference type="ChEBI" id="CHEBI:57604"/>
        <dbReference type="ChEBI" id="CHEBI:58272"/>
        <dbReference type="ChEBI" id="CHEBI:456216"/>
        <dbReference type="EC" id="2.7.2.3"/>
    </reaction>
</comment>
<comment type="pathway">
    <text evidence="1">Carbohydrate degradation; glycolysis; pyruvate from D-glyceraldehyde 3-phosphate: step 2/5.</text>
</comment>
<comment type="subunit">
    <text evidence="1">Monomer.</text>
</comment>
<comment type="subcellular location">
    <subcellularLocation>
        <location evidence="1">Cytoplasm</location>
    </subcellularLocation>
</comment>
<comment type="similarity">
    <text evidence="1">Belongs to the phosphoglycerate kinase family.</text>
</comment>
<feature type="chain" id="PRO_1000096363" description="Phosphoglycerate kinase">
    <location>
        <begin position="1"/>
        <end position="397"/>
    </location>
</feature>
<feature type="binding site" evidence="1">
    <location>
        <begin position="21"/>
        <end position="23"/>
    </location>
    <ligand>
        <name>substrate</name>
    </ligand>
</feature>
<feature type="binding site" evidence="1">
    <location>
        <position position="37"/>
    </location>
    <ligand>
        <name>substrate</name>
    </ligand>
</feature>
<feature type="binding site" evidence="1">
    <location>
        <begin position="60"/>
        <end position="63"/>
    </location>
    <ligand>
        <name>substrate</name>
    </ligand>
</feature>
<feature type="binding site" evidence="1">
    <location>
        <position position="119"/>
    </location>
    <ligand>
        <name>substrate</name>
    </ligand>
</feature>
<feature type="binding site" evidence="1">
    <location>
        <position position="152"/>
    </location>
    <ligand>
        <name>substrate</name>
    </ligand>
</feature>
<feature type="binding site" evidence="1">
    <location>
        <position position="203"/>
    </location>
    <ligand>
        <name>ATP</name>
        <dbReference type="ChEBI" id="CHEBI:30616"/>
    </ligand>
</feature>
<feature type="binding site" evidence="1">
    <location>
        <position position="294"/>
    </location>
    <ligand>
        <name>ATP</name>
        <dbReference type="ChEBI" id="CHEBI:30616"/>
    </ligand>
</feature>
<feature type="binding site" evidence="1">
    <location>
        <position position="325"/>
    </location>
    <ligand>
        <name>ATP</name>
        <dbReference type="ChEBI" id="CHEBI:30616"/>
    </ligand>
</feature>
<feature type="binding site" evidence="1">
    <location>
        <begin position="354"/>
        <end position="357"/>
    </location>
    <ligand>
        <name>ATP</name>
        <dbReference type="ChEBI" id="CHEBI:30616"/>
    </ligand>
</feature>
<reference key="1">
    <citation type="submission" date="2008-06" db="EMBL/GenBank/DDBJ databases">
        <title>Complete sequence of Pelodictyon phaeoclathratiforme BU-1.</title>
        <authorList>
            <consortium name="US DOE Joint Genome Institute"/>
            <person name="Lucas S."/>
            <person name="Copeland A."/>
            <person name="Lapidus A."/>
            <person name="Glavina del Rio T."/>
            <person name="Dalin E."/>
            <person name="Tice H."/>
            <person name="Bruce D."/>
            <person name="Goodwin L."/>
            <person name="Pitluck S."/>
            <person name="Schmutz J."/>
            <person name="Larimer F."/>
            <person name="Land M."/>
            <person name="Hauser L."/>
            <person name="Kyrpides N."/>
            <person name="Mikhailova N."/>
            <person name="Liu Z."/>
            <person name="Li T."/>
            <person name="Zhao F."/>
            <person name="Overmann J."/>
            <person name="Bryant D.A."/>
            <person name="Richardson P."/>
        </authorList>
    </citation>
    <scope>NUCLEOTIDE SEQUENCE [LARGE SCALE GENOMIC DNA]</scope>
    <source>
        <strain>DSM 5477 / BU-1</strain>
    </source>
</reference>
<dbReference type="EC" id="2.7.2.3" evidence="1"/>
<dbReference type="EMBL" id="CP001110">
    <property type="protein sequence ID" value="ACF45049.1"/>
    <property type="molecule type" value="Genomic_DNA"/>
</dbReference>
<dbReference type="RefSeq" id="WP_012509517.1">
    <property type="nucleotide sequence ID" value="NC_011060.1"/>
</dbReference>
<dbReference type="SMR" id="B4SHF6"/>
<dbReference type="STRING" id="324925.Ppha_2906"/>
<dbReference type="KEGG" id="pph:Ppha_2906"/>
<dbReference type="eggNOG" id="COG0126">
    <property type="taxonomic scope" value="Bacteria"/>
</dbReference>
<dbReference type="HOGENOM" id="CLU_025427_0_2_10"/>
<dbReference type="OrthoDB" id="9808460at2"/>
<dbReference type="UniPathway" id="UPA00109">
    <property type="reaction ID" value="UER00185"/>
</dbReference>
<dbReference type="Proteomes" id="UP000002724">
    <property type="component" value="Chromosome"/>
</dbReference>
<dbReference type="GO" id="GO:0005829">
    <property type="term" value="C:cytosol"/>
    <property type="evidence" value="ECO:0007669"/>
    <property type="project" value="TreeGrafter"/>
</dbReference>
<dbReference type="GO" id="GO:0043531">
    <property type="term" value="F:ADP binding"/>
    <property type="evidence" value="ECO:0007669"/>
    <property type="project" value="TreeGrafter"/>
</dbReference>
<dbReference type="GO" id="GO:0005524">
    <property type="term" value="F:ATP binding"/>
    <property type="evidence" value="ECO:0007669"/>
    <property type="project" value="UniProtKB-KW"/>
</dbReference>
<dbReference type="GO" id="GO:0004618">
    <property type="term" value="F:phosphoglycerate kinase activity"/>
    <property type="evidence" value="ECO:0007669"/>
    <property type="project" value="UniProtKB-UniRule"/>
</dbReference>
<dbReference type="GO" id="GO:0006094">
    <property type="term" value="P:gluconeogenesis"/>
    <property type="evidence" value="ECO:0007669"/>
    <property type="project" value="TreeGrafter"/>
</dbReference>
<dbReference type="GO" id="GO:0006096">
    <property type="term" value="P:glycolytic process"/>
    <property type="evidence" value="ECO:0007669"/>
    <property type="project" value="UniProtKB-UniRule"/>
</dbReference>
<dbReference type="CDD" id="cd00318">
    <property type="entry name" value="Phosphoglycerate_kinase"/>
    <property type="match status" value="1"/>
</dbReference>
<dbReference type="FunFam" id="3.40.50.1260:FF:000002">
    <property type="entry name" value="Phosphoglycerate kinase"/>
    <property type="match status" value="1"/>
</dbReference>
<dbReference type="FunFam" id="3.40.50.1260:FF:000007">
    <property type="entry name" value="Phosphoglycerate kinase"/>
    <property type="match status" value="1"/>
</dbReference>
<dbReference type="Gene3D" id="3.40.50.1260">
    <property type="entry name" value="Phosphoglycerate kinase, N-terminal domain"/>
    <property type="match status" value="2"/>
</dbReference>
<dbReference type="HAMAP" id="MF_00145">
    <property type="entry name" value="Phosphoglyc_kinase"/>
    <property type="match status" value="1"/>
</dbReference>
<dbReference type="InterPro" id="IPR001576">
    <property type="entry name" value="Phosphoglycerate_kinase"/>
</dbReference>
<dbReference type="InterPro" id="IPR015911">
    <property type="entry name" value="Phosphoglycerate_kinase_CS"/>
</dbReference>
<dbReference type="InterPro" id="IPR015824">
    <property type="entry name" value="Phosphoglycerate_kinase_N"/>
</dbReference>
<dbReference type="InterPro" id="IPR036043">
    <property type="entry name" value="Phosphoglycerate_kinase_sf"/>
</dbReference>
<dbReference type="PANTHER" id="PTHR11406">
    <property type="entry name" value="PHOSPHOGLYCERATE KINASE"/>
    <property type="match status" value="1"/>
</dbReference>
<dbReference type="PANTHER" id="PTHR11406:SF23">
    <property type="entry name" value="PHOSPHOGLYCERATE KINASE 1, CHLOROPLASTIC-RELATED"/>
    <property type="match status" value="1"/>
</dbReference>
<dbReference type="Pfam" id="PF00162">
    <property type="entry name" value="PGK"/>
    <property type="match status" value="1"/>
</dbReference>
<dbReference type="PIRSF" id="PIRSF000724">
    <property type="entry name" value="Pgk"/>
    <property type="match status" value="1"/>
</dbReference>
<dbReference type="PRINTS" id="PR00477">
    <property type="entry name" value="PHGLYCKINASE"/>
</dbReference>
<dbReference type="SUPFAM" id="SSF53748">
    <property type="entry name" value="Phosphoglycerate kinase"/>
    <property type="match status" value="1"/>
</dbReference>
<dbReference type="PROSITE" id="PS00111">
    <property type="entry name" value="PGLYCERATE_KINASE"/>
    <property type="match status" value="1"/>
</dbReference>
<protein>
    <recommendedName>
        <fullName evidence="1">Phosphoglycerate kinase</fullName>
        <ecNumber evidence="1">2.7.2.3</ecNumber>
    </recommendedName>
</protein>
<keyword id="KW-0067">ATP-binding</keyword>
<keyword id="KW-0963">Cytoplasm</keyword>
<keyword id="KW-0324">Glycolysis</keyword>
<keyword id="KW-0418">Kinase</keyword>
<keyword id="KW-0547">Nucleotide-binding</keyword>
<keyword id="KW-1185">Reference proteome</keyword>
<keyword id="KW-0808">Transferase</keyword>
<evidence type="ECO:0000255" key="1">
    <source>
        <dbReference type="HAMAP-Rule" id="MF_00145"/>
    </source>
</evidence>
<accession>B4SHF6</accession>
<organism>
    <name type="scientific">Pelodictyon phaeoclathratiforme (strain DSM 5477 / BU-1)</name>
    <dbReference type="NCBI Taxonomy" id="324925"/>
    <lineage>
        <taxon>Bacteria</taxon>
        <taxon>Pseudomonadati</taxon>
        <taxon>Chlorobiota</taxon>
        <taxon>Chlorobiia</taxon>
        <taxon>Chlorobiales</taxon>
        <taxon>Chlorobiaceae</taxon>
        <taxon>Chlorobium/Pelodictyon group</taxon>
        <taxon>Pelodictyon</taxon>
    </lineage>
</organism>
<name>PGK_PELPB</name>